<name>MSRQ_ECO57</name>
<dbReference type="EMBL" id="AE005174">
    <property type="protein sequence ID" value="AAG56985.1"/>
    <property type="molecule type" value="Genomic_DNA"/>
</dbReference>
<dbReference type="EMBL" id="BA000007">
    <property type="protein sequence ID" value="BAB36133.1"/>
    <property type="molecule type" value="Genomic_DNA"/>
</dbReference>
<dbReference type="PIR" id="E85815">
    <property type="entry name" value="E85815"/>
</dbReference>
<dbReference type="PIR" id="F90967">
    <property type="entry name" value="F90967"/>
</dbReference>
<dbReference type="RefSeq" id="WP_001240083.1">
    <property type="nucleotide sequence ID" value="NZ_VOAI01000028.1"/>
</dbReference>
<dbReference type="SMR" id="Q8XB73"/>
<dbReference type="STRING" id="155864.Z3064"/>
<dbReference type="TCDB" id="5.B.7.1.1">
    <property type="family name" value="the yedz (yedz) family"/>
</dbReference>
<dbReference type="KEGG" id="ece:Z3064"/>
<dbReference type="KEGG" id="ecs:ECs_2710"/>
<dbReference type="PATRIC" id="fig|386585.9.peg.2838"/>
<dbReference type="eggNOG" id="COG2717">
    <property type="taxonomic scope" value="Bacteria"/>
</dbReference>
<dbReference type="HOGENOM" id="CLU_080662_0_1_6"/>
<dbReference type="OMA" id="LHFFWMR"/>
<dbReference type="Proteomes" id="UP000000558">
    <property type="component" value="Chromosome"/>
</dbReference>
<dbReference type="Proteomes" id="UP000002519">
    <property type="component" value="Chromosome"/>
</dbReference>
<dbReference type="GO" id="GO:0005886">
    <property type="term" value="C:plasma membrane"/>
    <property type="evidence" value="ECO:0007669"/>
    <property type="project" value="UniProtKB-SubCell"/>
</dbReference>
<dbReference type="GO" id="GO:0009055">
    <property type="term" value="F:electron transfer activity"/>
    <property type="evidence" value="ECO:0007669"/>
    <property type="project" value="UniProtKB-UniRule"/>
</dbReference>
<dbReference type="GO" id="GO:0010181">
    <property type="term" value="F:FMN binding"/>
    <property type="evidence" value="ECO:0007669"/>
    <property type="project" value="UniProtKB-UniRule"/>
</dbReference>
<dbReference type="GO" id="GO:0020037">
    <property type="term" value="F:heme binding"/>
    <property type="evidence" value="ECO:0007669"/>
    <property type="project" value="UniProtKB-UniRule"/>
</dbReference>
<dbReference type="GO" id="GO:0046872">
    <property type="term" value="F:metal ion binding"/>
    <property type="evidence" value="ECO:0007669"/>
    <property type="project" value="UniProtKB-KW"/>
</dbReference>
<dbReference type="GO" id="GO:0016679">
    <property type="term" value="F:oxidoreductase activity, acting on diphenols and related substances as donors"/>
    <property type="evidence" value="ECO:0007669"/>
    <property type="project" value="TreeGrafter"/>
</dbReference>
<dbReference type="GO" id="GO:0030091">
    <property type="term" value="P:protein repair"/>
    <property type="evidence" value="ECO:0007669"/>
    <property type="project" value="UniProtKB-UniRule"/>
</dbReference>
<dbReference type="HAMAP" id="MF_01207">
    <property type="entry name" value="MsrQ"/>
    <property type="match status" value="1"/>
</dbReference>
<dbReference type="InterPro" id="IPR013130">
    <property type="entry name" value="Fe3_Rdtase_TM_dom"/>
</dbReference>
<dbReference type="InterPro" id="IPR022837">
    <property type="entry name" value="MsrQ-like"/>
</dbReference>
<dbReference type="NCBIfam" id="NF003830">
    <property type="entry name" value="PRK05419.1-1"/>
    <property type="match status" value="1"/>
</dbReference>
<dbReference type="NCBIfam" id="NF003831">
    <property type="entry name" value="PRK05419.1-2"/>
    <property type="match status" value="1"/>
</dbReference>
<dbReference type="NCBIfam" id="NF003832">
    <property type="entry name" value="PRK05419.1-4"/>
    <property type="match status" value="1"/>
</dbReference>
<dbReference type="PANTHER" id="PTHR36964">
    <property type="entry name" value="PROTEIN-METHIONINE-SULFOXIDE REDUCTASE HEME-BINDING SUBUNIT MSRQ"/>
    <property type="match status" value="1"/>
</dbReference>
<dbReference type="PANTHER" id="PTHR36964:SF1">
    <property type="entry name" value="PROTEIN-METHIONINE-SULFOXIDE REDUCTASE HEME-BINDING SUBUNIT MSRQ"/>
    <property type="match status" value="1"/>
</dbReference>
<dbReference type="Pfam" id="PF01794">
    <property type="entry name" value="Ferric_reduct"/>
    <property type="match status" value="1"/>
</dbReference>
<sequence length="211" mass="24056">MRLTAKQVTWLKVCLHLAGLLPFLWLVWAINHGGLGADPVKDIQHFTGRTALKFLLATLLITPLARYAKQPLLIRTRRLLGLWCFAWATLHLTSYALLELGVNNLALLGKELITRPYLTLGIISWIILLALAFTSTQAMQRKLGKHWQQLHNFVYLVAILAPIHYLWSVKIISPQPLIYAGLAVLLLALRYKKSRSLFNRLRKQVHNKLSV</sequence>
<accession>Q8XB73</accession>
<keyword id="KW-0997">Cell inner membrane</keyword>
<keyword id="KW-1003">Cell membrane</keyword>
<keyword id="KW-0249">Electron transport</keyword>
<keyword id="KW-0285">Flavoprotein</keyword>
<keyword id="KW-0288">FMN</keyword>
<keyword id="KW-0349">Heme</keyword>
<keyword id="KW-0408">Iron</keyword>
<keyword id="KW-0472">Membrane</keyword>
<keyword id="KW-0479">Metal-binding</keyword>
<keyword id="KW-1185">Reference proteome</keyword>
<keyword id="KW-0812">Transmembrane</keyword>
<keyword id="KW-1133">Transmembrane helix</keyword>
<keyword id="KW-0813">Transport</keyword>
<reference key="1">
    <citation type="journal article" date="2001" name="Nature">
        <title>Genome sequence of enterohaemorrhagic Escherichia coli O157:H7.</title>
        <authorList>
            <person name="Perna N.T."/>
            <person name="Plunkett G. III"/>
            <person name="Burland V."/>
            <person name="Mau B."/>
            <person name="Glasner J.D."/>
            <person name="Rose D.J."/>
            <person name="Mayhew G.F."/>
            <person name="Evans P.S."/>
            <person name="Gregor J."/>
            <person name="Kirkpatrick H.A."/>
            <person name="Posfai G."/>
            <person name="Hackett J."/>
            <person name="Klink S."/>
            <person name="Boutin A."/>
            <person name="Shao Y."/>
            <person name="Miller L."/>
            <person name="Grotbeck E.J."/>
            <person name="Davis N.W."/>
            <person name="Lim A."/>
            <person name="Dimalanta E.T."/>
            <person name="Potamousis K."/>
            <person name="Apodaca J."/>
            <person name="Anantharaman T.S."/>
            <person name="Lin J."/>
            <person name="Yen G."/>
            <person name="Schwartz D.C."/>
            <person name="Welch R.A."/>
            <person name="Blattner F.R."/>
        </authorList>
    </citation>
    <scope>NUCLEOTIDE SEQUENCE [LARGE SCALE GENOMIC DNA]</scope>
    <source>
        <strain>O157:H7 / EDL933 / ATCC 700927 / EHEC</strain>
    </source>
</reference>
<reference key="2">
    <citation type="journal article" date="2001" name="DNA Res.">
        <title>Complete genome sequence of enterohemorrhagic Escherichia coli O157:H7 and genomic comparison with a laboratory strain K-12.</title>
        <authorList>
            <person name="Hayashi T."/>
            <person name="Makino K."/>
            <person name="Ohnishi M."/>
            <person name="Kurokawa K."/>
            <person name="Ishii K."/>
            <person name="Yokoyama K."/>
            <person name="Han C.-G."/>
            <person name="Ohtsubo E."/>
            <person name="Nakayama K."/>
            <person name="Murata T."/>
            <person name="Tanaka M."/>
            <person name="Tobe T."/>
            <person name="Iida T."/>
            <person name="Takami H."/>
            <person name="Honda T."/>
            <person name="Sasakawa C."/>
            <person name="Ogasawara N."/>
            <person name="Yasunaga T."/>
            <person name="Kuhara S."/>
            <person name="Shiba T."/>
            <person name="Hattori M."/>
            <person name="Shinagawa H."/>
        </authorList>
    </citation>
    <scope>NUCLEOTIDE SEQUENCE [LARGE SCALE GENOMIC DNA]</scope>
    <source>
        <strain>O157:H7 / Sakai / RIMD 0509952 / EHEC</strain>
    </source>
</reference>
<protein>
    <recommendedName>
        <fullName evidence="1">Protein-methionine-sulfoxide reductase heme-binding subunit MsrQ</fullName>
    </recommendedName>
    <alternativeName>
        <fullName evidence="1">Flavocytochrome MsrQ</fullName>
    </alternativeName>
</protein>
<organism>
    <name type="scientific">Escherichia coli O157:H7</name>
    <dbReference type="NCBI Taxonomy" id="83334"/>
    <lineage>
        <taxon>Bacteria</taxon>
        <taxon>Pseudomonadati</taxon>
        <taxon>Pseudomonadota</taxon>
        <taxon>Gammaproteobacteria</taxon>
        <taxon>Enterobacterales</taxon>
        <taxon>Enterobacteriaceae</taxon>
        <taxon>Escherichia</taxon>
    </lineage>
</organism>
<evidence type="ECO:0000255" key="1">
    <source>
        <dbReference type="HAMAP-Rule" id="MF_01207"/>
    </source>
</evidence>
<gene>
    <name evidence="1" type="primary">msrQ</name>
    <name type="ordered locus">Z3064</name>
    <name type="ordered locus">ECs2710</name>
</gene>
<feature type="chain" id="PRO_0000091576" description="Protein-methionine-sulfoxide reductase heme-binding subunit MsrQ">
    <location>
        <begin position="1"/>
        <end position="211"/>
    </location>
</feature>
<feature type="transmembrane region" description="Helical" evidence="1">
    <location>
        <begin position="10"/>
        <end position="30"/>
    </location>
</feature>
<feature type="transmembrane region" description="Helical" evidence="1">
    <location>
        <begin position="82"/>
        <end position="102"/>
    </location>
</feature>
<feature type="transmembrane region" description="Helical" evidence="1">
    <location>
        <begin position="116"/>
        <end position="136"/>
    </location>
</feature>
<feature type="transmembrane region" description="Helical" evidence="1">
    <location>
        <begin position="153"/>
        <end position="173"/>
    </location>
</feature>
<comment type="function">
    <text evidence="1">Part of the MsrPQ system that repairs oxidized periplasmic proteins containing methionine sulfoxide residues (Met-O), using respiratory chain electrons. Thus protects these proteins from oxidative-stress damage caused by reactive species of oxygen and chlorine generated by the host defense mechanisms. MsrPQ is essential for the maintenance of envelope integrity under bleach stress, rescuing a wide series of structurally unrelated periplasmic proteins from methionine oxidation, including the primary periplasmic chaperone SurA and the lipoprotein Pal. MsrQ provides electrons for reduction to the reductase catalytic subunit MsrP, using the quinone pool of the respiratory chain.</text>
</comment>
<comment type="cofactor">
    <cofactor evidence="1">
        <name>FMN</name>
        <dbReference type="ChEBI" id="CHEBI:58210"/>
    </cofactor>
    <text evidence="1">Binds 1 FMN per subunit.</text>
</comment>
<comment type="cofactor">
    <cofactor evidence="1">
        <name>heme b</name>
        <dbReference type="ChEBI" id="CHEBI:60344"/>
    </cofactor>
    <text evidence="1">Binds 1 heme b (iron(II)-protoporphyrin IX) group per subunit.</text>
</comment>
<comment type="subunit">
    <text evidence="1">Heterodimer of a catalytic subunit (MsrP) and a heme-binding subunit (MsrQ).</text>
</comment>
<comment type="subcellular location">
    <subcellularLocation>
        <location evidence="1">Cell inner membrane</location>
        <topology evidence="1">Multi-pass membrane protein</topology>
    </subcellularLocation>
</comment>
<comment type="similarity">
    <text evidence="1">Belongs to the MsrQ family.</text>
</comment>
<proteinExistence type="inferred from homology"/>